<reference key="1">
    <citation type="journal article" date="2002" name="Nature">
        <title>Complete genome sequence of the model actinomycete Streptomyces coelicolor A3(2).</title>
        <authorList>
            <person name="Bentley S.D."/>
            <person name="Chater K.F."/>
            <person name="Cerdeno-Tarraga A.-M."/>
            <person name="Challis G.L."/>
            <person name="Thomson N.R."/>
            <person name="James K.D."/>
            <person name="Harris D.E."/>
            <person name="Quail M.A."/>
            <person name="Kieser H."/>
            <person name="Harper D."/>
            <person name="Bateman A."/>
            <person name="Brown S."/>
            <person name="Chandra G."/>
            <person name="Chen C.W."/>
            <person name="Collins M."/>
            <person name="Cronin A."/>
            <person name="Fraser A."/>
            <person name="Goble A."/>
            <person name="Hidalgo J."/>
            <person name="Hornsby T."/>
            <person name="Howarth S."/>
            <person name="Huang C.-H."/>
            <person name="Kieser T."/>
            <person name="Larke L."/>
            <person name="Murphy L.D."/>
            <person name="Oliver K."/>
            <person name="O'Neil S."/>
            <person name="Rabbinowitsch E."/>
            <person name="Rajandream M.A."/>
            <person name="Rutherford K.M."/>
            <person name="Rutter S."/>
            <person name="Seeger K."/>
            <person name="Saunders D."/>
            <person name="Sharp S."/>
            <person name="Squares R."/>
            <person name="Squares S."/>
            <person name="Taylor K."/>
            <person name="Warren T."/>
            <person name="Wietzorrek A."/>
            <person name="Woodward J.R."/>
            <person name="Barrell B.G."/>
            <person name="Parkhill J."/>
            <person name="Hopwood D.A."/>
        </authorList>
    </citation>
    <scope>NUCLEOTIDE SEQUENCE [LARGE SCALE GENOMIC DNA]</scope>
    <source>
        <strain>ATCC BAA-471 / A3(2) / M145</strain>
    </source>
</reference>
<gene>
    <name type="primary">ctaD1</name>
    <name type="ordered locus">SCO2155</name>
    <name type="ORF">SC6G10.28c</name>
</gene>
<proteinExistence type="inferred from homology"/>
<sequence length="578" mass="64122">MSILNEPQGASAAEDSYENELPVRRKQPGNVVIKWLTTTDHKTIGTMYLVTSFAFFVIGGVMALFMRAELARPGLQIMSNEQFNQAFTMHGTIMLLMFATPLFAGFANWIMPLQIGAPDVAFPRLNMFAYWLYLFGSTIAVGGFLTPQGAADFGWFAYSPLSDAVHSPGIGGDLWIMGLAFSGFGTILGSVNFITTIICMRAPGMTMFRMPIFTWNVLLTGVLVLLAFPVLAAALFALEADRKFGAHIFDSSNGGALLWQHLFWFFGHPEVYIIALPFFGIVSEIIPVFSRKPIFGYMGLIGATIAIAGLSVTVWAHHMYVTGGVLLPFFSFMTFLIAVPTGVKFFNWIGTMWKGSLSFETPMLWSTGFLITFLFGGLTGVILASPPLDFHVSDSYFVVAHFHYVVFGTVVFAMFAGFHFWWPKFTGKMLDERLGKITFWTLFVGFHGTFLVQHWLGAEGMPRRYADYLAADGFTALNTISTISSFLLGMSILPFFYNIWKTAKYGKKIEVDDPWGYGRSLEWATSCPPPRHNFLTLPRIRSESPAFDLHHPEISAIDQLENVGHGEKALAGGKEAGK</sequence>
<keyword id="KW-1003">Cell membrane</keyword>
<keyword id="KW-0186">Copper</keyword>
<keyword id="KW-0249">Electron transport</keyword>
<keyword id="KW-0349">Heme</keyword>
<keyword id="KW-0408">Iron</keyword>
<keyword id="KW-0472">Membrane</keyword>
<keyword id="KW-0479">Metal-binding</keyword>
<keyword id="KW-1185">Reference proteome</keyword>
<keyword id="KW-0679">Respiratory chain</keyword>
<keyword id="KW-1278">Translocase</keyword>
<keyword id="KW-0812">Transmembrane</keyword>
<keyword id="KW-1133">Transmembrane helix</keyword>
<keyword id="KW-0813">Transport</keyword>
<name>COX1A_STRCO</name>
<organism>
    <name type="scientific">Streptomyces coelicolor (strain ATCC BAA-471 / A3(2) / M145)</name>
    <dbReference type="NCBI Taxonomy" id="100226"/>
    <lineage>
        <taxon>Bacteria</taxon>
        <taxon>Bacillati</taxon>
        <taxon>Actinomycetota</taxon>
        <taxon>Actinomycetes</taxon>
        <taxon>Kitasatosporales</taxon>
        <taxon>Streptomycetaceae</taxon>
        <taxon>Streptomyces</taxon>
        <taxon>Streptomyces albidoflavus group</taxon>
    </lineage>
</organism>
<accession>Q9X813</accession>
<evidence type="ECO:0000250" key="1"/>
<evidence type="ECO:0000255" key="2"/>
<evidence type="ECO:0000256" key="3">
    <source>
        <dbReference type="SAM" id="MobiDB-lite"/>
    </source>
</evidence>
<evidence type="ECO:0000305" key="4"/>
<feature type="chain" id="PRO_0000183452" description="Probable cytochrome c oxidase subunit 1-alpha">
    <location>
        <begin position="1"/>
        <end position="578"/>
    </location>
</feature>
<feature type="transmembrane region" description="Helical" evidence="2">
    <location>
        <begin position="44"/>
        <end position="64"/>
    </location>
</feature>
<feature type="transmembrane region" description="Helical" evidence="2">
    <location>
        <begin position="93"/>
        <end position="113"/>
    </location>
</feature>
<feature type="transmembrane region" description="Helical" evidence="2">
    <location>
        <begin position="125"/>
        <end position="145"/>
    </location>
</feature>
<feature type="transmembrane region" description="Helical" evidence="2">
    <location>
        <begin position="174"/>
        <end position="194"/>
    </location>
</feature>
<feature type="transmembrane region" description="Helical" evidence="2">
    <location>
        <begin position="217"/>
        <end position="237"/>
    </location>
</feature>
<feature type="transmembrane region" description="Helical" evidence="2">
    <location>
        <begin position="262"/>
        <end position="282"/>
    </location>
</feature>
<feature type="transmembrane region" description="Helical" evidence="2">
    <location>
        <begin position="294"/>
        <end position="314"/>
    </location>
</feature>
<feature type="transmembrane region" description="Helical" evidence="2">
    <location>
        <begin position="319"/>
        <end position="339"/>
    </location>
</feature>
<feature type="transmembrane region" description="Helical" evidence="2">
    <location>
        <begin position="363"/>
        <end position="383"/>
    </location>
</feature>
<feature type="transmembrane region" description="Helical" evidence="2">
    <location>
        <begin position="402"/>
        <end position="422"/>
    </location>
</feature>
<feature type="transmembrane region" description="Helical" evidence="2">
    <location>
        <begin position="437"/>
        <end position="457"/>
    </location>
</feature>
<feature type="transmembrane region" description="Helical" evidence="2">
    <location>
        <begin position="480"/>
        <end position="500"/>
    </location>
</feature>
<feature type="region of interest" description="Disordered" evidence="3">
    <location>
        <begin position="1"/>
        <end position="21"/>
    </location>
</feature>
<feature type="binding site" description="axial binding residue" evidence="1">
    <location>
        <position position="90"/>
    </location>
    <ligand>
        <name>Fe(II)-heme a</name>
        <dbReference type="ChEBI" id="CHEBI:61715"/>
    </ligand>
    <ligandPart>
        <name>Fe</name>
        <dbReference type="ChEBI" id="CHEBI:18248"/>
    </ligandPart>
</feature>
<feature type="binding site" evidence="1">
    <location>
        <position position="268"/>
    </location>
    <ligand>
        <name>Cu cation</name>
        <dbReference type="ChEBI" id="CHEBI:23378"/>
        <label>B</label>
    </ligand>
</feature>
<feature type="binding site" evidence="1">
    <location>
        <position position="272"/>
    </location>
    <ligand>
        <name>Cu cation</name>
        <dbReference type="ChEBI" id="CHEBI:23378"/>
        <label>B</label>
    </ligand>
</feature>
<feature type="binding site" evidence="1">
    <location>
        <position position="317"/>
    </location>
    <ligand>
        <name>Cu cation</name>
        <dbReference type="ChEBI" id="CHEBI:23378"/>
        <label>B</label>
    </ligand>
</feature>
<feature type="binding site" evidence="1">
    <location>
        <position position="318"/>
    </location>
    <ligand>
        <name>Cu cation</name>
        <dbReference type="ChEBI" id="CHEBI:23378"/>
        <label>B</label>
    </ligand>
</feature>
<feature type="binding site" description="axial binding residue" evidence="1">
    <location>
        <position position="401"/>
    </location>
    <ligand>
        <name>heme a3</name>
        <dbReference type="ChEBI" id="CHEBI:83282"/>
    </ligand>
    <ligandPart>
        <name>Fe</name>
        <dbReference type="ChEBI" id="CHEBI:18248"/>
    </ligandPart>
</feature>
<feature type="binding site" description="axial binding residue" evidence="1">
    <location>
        <position position="403"/>
    </location>
    <ligand>
        <name>Fe(II)-heme a</name>
        <dbReference type="ChEBI" id="CHEBI:61715"/>
    </ligand>
    <ligandPart>
        <name>Fe</name>
        <dbReference type="ChEBI" id="CHEBI:18248"/>
    </ligandPart>
</feature>
<feature type="cross-link" description="1'-histidyl-3'-tyrosine (His-Tyr)" evidence="1">
    <location>
        <begin position="268"/>
        <end position="272"/>
    </location>
</feature>
<comment type="function">
    <text evidence="1">Cytochrome c oxidase is the component of the respiratory chain that catalyzes the reduction of oxygen to water. Subunits 1-3 form the functional core of the enzyme complex. CO I is the catalytic subunit of the enzyme. Electrons originating in cytochrome c are transferred via the copper A center of subunit 2 and heme A of subunit 1 to the bimetallic center formed by heme A3 and copper B (By similarity).</text>
</comment>
<comment type="catalytic activity">
    <reaction>
        <text>4 Fe(II)-[cytochrome c] + O2 + 8 H(+)(in) = 4 Fe(III)-[cytochrome c] + 2 H2O + 4 H(+)(out)</text>
        <dbReference type="Rhea" id="RHEA:11436"/>
        <dbReference type="Rhea" id="RHEA-COMP:10350"/>
        <dbReference type="Rhea" id="RHEA-COMP:14399"/>
        <dbReference type="ChEBI" id="CHEBI:15377"/>
        <dbReference type="ChEBI" id="CHEBI:15378"/>
        <dbReference type="ChEBI" id="CHEBI:15379"/>
        <dbReference type="ChEBI" id="CHEBI:29033"/>
        <dbReference type="ChEBI" id="CHEBI:29034"/>
        <dbReference type="EC" id="7.1.1.9"/>
    </reaction>
</comment>
<comment type="cofactor">
    <cofactor evidence="1">
        <name>Cu(2+)</name>
        <dbReference type="ChEBI" id="CHEBI:29036"/>
    </cofactor>
    <text evidence="1">Binds 1 copper B ion per subunit.</text>
</comment>
<comment type="cofactor">
    <cofactor evidence="1">
        <name>heme</name>
        <dbReference type="ChEBI" id="CHEBI:30413"/>
    </cofactor>
    <text evidence="1">Binds 2 heme groups per subunit.</text>
</comment>
<comment type="pathway">
    <text>Energy metabolism; oxidative phosphorylation.</text>
</comment>
<comment type="subunit">
    <text evidence="1">Associates with subunits II, III and IV to form cytochrome c oxidase.</text>
</comment>
<comment type="subcellular location">
    <subcellularLocation>
        <location evidence="1">Cell membrane</location>
        <topology evidence="1">Multi-pass membrane protein</topology>
    </subcellularLocation>
</comment>
<comment type="similarity">
    <text evidence="4">Belongs to the heme-copper respiratory oxidase family.</text>
</comment>
<dbReference type="EC" id="7.1.1.9"/>
<dbReference type="EMBL" id="AL939111">
    <property type="protein sequence ID" value="CAB39882.1"/>
    <property type="molecule type" value="Genomic_DNA"/>
</dbReference>
<dbReference type="PIR" id="T35537">
    <property type="entry name" value="T35537"/>
</dbReference>
<dbReference type="RefSeq" id="NP_626411.1">
    <property type="nucleotide sequence ID" value="NC_003888.3"/>
</dbReference>
<dbReference type="SMR" id="Q9X813"/>
<dbReference type="FunCoup" id="Q9X813">
    <property type="interactions" value="73"/>
</dbReference>
<dbReference type="STRING" id="100226.gene:17759753"/>
<dbReference type="TCDB" id="3.D.4.4.5">
    <property type="family name" value="the proton-translocating cytochrome oxidase (cox) superfamily"/>
</dbReference>
<dbReference type="PaxDb" id="100226-SCO2155"/>
<dbReference type="KEGG" id="sco:SCO2155"/>
<dbReference type="PATRIC" id="fig|100226.15.peg.2190"/>
<dbReference type="eggNOG" id="COG0843">
    <property type="taxonomic scope" value="Bacteria"/>
</dbReference>
<dbReference type="HOGENOM" id="CLU_011899_7_3_11"/>
<dbReference type="InParanoid" id="Q9X813"/>
<dbReference type="OrthoDB" id="9803294at2"/>
<dbReference type="PhylomeDB" id="Q9X813"/>
<dbReference type="UniPathway" id="UPA00705"/>
<dbReference type="Proteomes" id="UP000001973">
    <property type="component" value="Chromosome"/>
</dbReference>
<dbReference type="GO" id="GO:0005886">
    <property type="term" value="C:plasma membrane"/>
    <property type="evidence" value="ECO:0007669"/>
    <property type="project" value="UniProtKB-SubCell"/>
</dbReference>
<dbReference type="GO" id="GO:0004129">
    <property type="term" value="F:cytochrome-c oxidase activity"/>
    <property type="evidence" value="ECO:0007669"/>
    <property type="project" value="UniProtKB-EC"/>
</dbReference>
<dbReference type="GO" id="GO:0020037">
    <property type="term" value="F:heme binding"/>
    <property type="evidence" value="ECO:0007669"/>
    <property type="project" value="InterPro"/>
</dbReference>
<dbReference type="GO" id="GO:0046872">
    <property type="term" value="F:metal ion binding"/>
    <property type="evidence" value="ECO:0007669"/>
    <property type="project" value="UniProtKB-KW"/>
</dbReference>
<dbReference type="GO" id="GO:0009060">
    <property type="term" value="P:aerobic respiration"/>
    <property type="evidence" value="ECO:0000318"/>
    <property type="project" value="GO_Central"/>
</dbReference>
<dbReference type="GO" id="GO:0015990">
    <property type="term" value="P:electron transport coupled proton transport"/>
    <property type="evidence" value="ECO:0007669"/>
    <property type="project" value="InterPro"/>
</dbReference>
<dbReference type="GO" id="GO:0006119">
    <property type="term" value="P:oxidative phosphorylation"/>
    <property type="evidence" value="ECO:0007669"/>
    <property type="project" value="UniProtKB-UniPathway"/>
</dbReference>
<dbReference type="GO" id="GO:0022904">
    <property type="term" value="P:respiratory electron transport chain"/>
    <property type="evidence" value="ECO:0000318"/>
    <property type="project" value="GO_Central"/>
</dbReference>
<dbReference type="CDD" id="cd01662">
    <property type="entry name" value="Ubiquinol_Oxidase_I"/>
    <property type="match status" value="1"/>
</dbReference>
<dbReference type="FunFam" id="1.20.210.10:FF:000003">
    <property type="entry name" value="Cytochrome c oxidase subunit 1"/>
    <property type="match status" value="1"/>
</dbReference>
<dbReference type="Gene3D" id="1.20.210.10">
    <property type="entry name" value="Cytochrome c oxidase-like, subunit I domain"/>
    <property type="match status" value="1"/>
</dbReference>
<dbReference type="InterPro" id="IPR023616">
    <property type="entry name" value="Cyt_c_oxase-like_su1_dom"/>
</dbReference>
<dbReference type="InterPro" id="IPR036927">
    <property type="entry name" value="Cyt_c_oxase-like_su1_sf"/>
</dbReference>
<dbReference type="InterPro" id="IPR000883">
    <property type="entry name" value="Cyt_C_Oxase_1"/>
</dbReference>
<dbReference type="InterPro" id="IPR023615">
    <property type="entry name" value="Cyt_c_Oxase_su1_BS"/>
</dbReference>
<dbReference type="InterPro" id="IPR014241">
    <property type="entry name" value="Cyt_c_oxidase_su1_bac"/>
</dbReference>
<dbReference type="NCBIfam" id="TIGR02891">
    <property type="entry name" value="CtaD_CoxA"/>
    <property type="match status" value="1"/>
</dbReference>
<dbReference type="PANTHER" id="PTHR10422">
    <property type="entry name" value="CYTOCHROME C OXIDASE SUBUNIT 1"/>
    <property type="match status" value="1"/>
</dbReference>
<dbReference type="PANTHER" id="PTHR10422:SF18">
    <property type="entry name" value="CYTOCHROME C OXIDASE SUBUNIT 1"/>
    <property type="match status" value="1"/>
</dbReference>
<dbReference type="Pfam" id="PF00115">
    <property type="entry name" value="COX1"/>
    <property type="match status" value="1"/>
</dbReference>
<dbReference type="PRINTS" id="PR01165">
    <property type="entry name" value="CYCOXIDASEI"/>
</dbReference>
<dbReference type="SUPFAM" id="SSF81442">
    <property type="entry name" value="Cytochrome c oxidase subunit I-like"/>
    <property type="match status" value="1"/>
</dbReference>
<dbReference type="PROSITE" id="PS50855">
    <property type="entry name" value="COX1"/>
    <property type="match status" value="1"/>
</dbReference>
<dbReference type="PROSITE" id="PS00077">
    <property type="entry name" value="COX1_CUB"/>
    <property type="match status" value="1"/>
</dbReference>
<protein>
    <recommendedName>
        <fullName>Probable cytochrome c oxidase subunit 1-alpha</fullName>
        <ecNumber>7.1.1.9</ecNumber>
    </recommendedName>
    <alternativeName>
        <fullName>Cytochrome aa3 subunit 1-alpha</fullName>
    </alternativeName>
    <alternativeName>
        <fullName>Cytochrome c oxidase polypeptide I-alpha</fullName>
    </alternativeName>
</protein>